<comment type="function">
    <text evidence="1">This b-type cytochrome is tightly associated with the reaction center of photosystem II (PSII). PSII is a light-driven water:plastoquinone oxidoreductase that uses light energy to abstract electrons from H(2)O, generating O(2) and a proton gradient subsequently used for ATP formation. It consists of a core antenna complex that captures photons, and an electron transfer chain that converts photonic excitation into a charge separation.</text>
</comment>
<comment type="cofactor">
    <cofactor evidence="1">
        <name>heme b</name>
        <dbReference type="ChEBI" id="CHEBI:60344"/>
    </cofactor>
    <text evidence="1">With its partner (PsbE) binds heme. PSII binds additional chlorophylls, carotenoids and specific lipids.</text>
</comment>
<comment type="subunit">
    <text evidence="1">Heterodimer of an alpha subunit and a beta subunit. PSII is composed of 1 copy each of membrane proteins PsbA, PsbB, PsbC, PsbD, PsbE, PsbF, PsbH, PsbI, PsbJ, PsbK, PsbL, PsbM, PsbT, PsbX, PsbY, PsbZ, Psb30/Ycf12, at least 3 peripheral proteins of the oxygen-evolving complex and a large number of cofactors. It forms dimeric complexes.</text>
</comment>
<comment type="subcellular location">
    <subcellularLocation>
        <location evidence="1">Plastid</location>
        <location evidence="1">Chloroplast thylakoid membrane</location>
        <topology evidence="1">Single-pass membrane protein</topology>
    </subcellularLocation>
</comment>
<comment type="similarity">
    <text evidence="1">Belongs to the PsbE/PsbF family.</text>
</comment>
<accession>Q6B8K5</accession>
<dbReference type="EMBL" id="AY673996">
    <property type="protein sequence ID" value="AAT79780.1"/>
    <property type="molecule type" value="Genomic_DNA"/>
</dbReference>
<dbReference type="RefSeq" id="YP_063705.1">
    <property type="nucleotide sequence ID" value="NC_006137.1"/>
</dbReference>
<dbReference type="GeneID" id="2943978"/>
<dbReference type="GO" id="GO:0009535">
    <property type="term" value="C:chloroplast thylakoid membrane"/>
    <property type="evidence" value="ECO:0007669"/>
    <property type="project" value="UniProtKB-SubCell"/>
</dbReference>
<dbReference type="GO" id="GO:0009539">
    <property type="term" value="C:photosystem II reaction center"/>
    <property type="evidence" value="ECO:0007669"/>
    <property type="project" value="InterPro"/>
</dbReference>
<dbReference type="GO" id="GO:0009055">
    <property type="term" value="F:electron transfer activity"/>
    <property type="evidence" value="ECO:0007669"/>
    <property type="project" value="UniProtKB-UniRule"/>
</dbReference>
<dbReference type="GO" id="GO:0020037">
    <property type="term" value="F:heme binding"/>
    <property type="evidence" value="ECO:0007669"/>
    <property type="project" value="InterPro"/>
</dbReference>
<dbReference type="GO" id="GO:0005506">
    <property type="term" value="F:iron ion binding"/>
    <property type="evidence" value="ECO:0007669"/>
    <property type="project" value="UniProtKB-UniRule"/>
</dbReference>
<dbReference type="GO" id="GO:0009767">
    <property type="term" value="P:photosynthetic electron transport chain"/>
    <property type="evidence" value="ECO:0007669"/>
    <property type="project" value="InterPro"/>
</dbReference>
<dbReference type="HAMAP" id="MF_00643">
    <property type="entry name" value="PSII_PsbF"/>
    <property type="match status" value="1"/>
</dbReference>
<dbReference type="InterPro" id="IPR006241">
    <property type="entry name" value="PSII_cyt_b559_bsu"/>
</dbReference>
<dbReference type="InterPro" id="IPR006216">
    <property type="entry name" value="PSII_cyt_b559_CS"/>
</dbReference>
<dbReference type="InterPro" id="IPR013081">
    <property type="entry name" value="PSII_cyt_b559_N"/>
</dbReference>
<dbReference type="NCBIfam" id="TIGR01333">
    <property type="entry name" value="cyt_b559_beta"/>
    <property type="match status" value="1"/>
</dbReference>
<dbReference type="Pfam" id="PF00283">
    <property type="entry name" value="Cytochrom_B559"/>
    <property type="match status" value="1"/>
</dbReference>
<dbReference type="PIRSF" id="PIRSF000037">
    <property type="entry name" value="PsbF"/>
    <property type="match status" value="1"/>
</dbReference>
<dbReference type="SUPFAM" id="SSF161045">
    <property type="entry name" value="Cytochrome b559 subunits"/>
    <property type="match status" value="1"/>
</dbReference>
<dbReference type="PROSITE" id="PS00537">
    <property type="entry name" value="CYTOCHROME_B559"/>
    <property type="match status" value="1"/>
</dbReference>
<gene>
    <name evidence="1" type="primary">psbF</name>
    <name type="ordered locus">Grc000199</name>
</gene>
<geneLocation type="chloroplast"/>
<keyword id="KW-0150">Chloroplast</keyword>
<keyword id="KW-0249">Electron transport</keyword>
<keyword id="KW-0349">Heme</keyword>
<keyword id="KW-0408">Iron</keyword>
<keyword id="KW-0472">Membrane</keyword>
<keyword id="KW-0479">Metal-binding</keyword>
<keyword id="KW-0602">Photosynthesis</keyword>
<keyword id="KW-0604">Photosystem II</keyword>
<keyword id="KW-0934">Plastid</keyword>
<keyword id="KW-0793">Thylakoid</keyword>
<keyword id="KW-0812">Transmembrane</keyword>
<keyword id="KW-1133">Transmembrane helix</keyword>
<keyword id="KW-0813">Transport</keyword>
<protein>
    <recommendedName>
        <fullName evidence="1">Cytochrome b559 subunit beta</fullName>
    </recommendedName>
    <alternativeName>
        <fullName evidence="1">PSII reaction center subunit VI</fullName>
    </alternativeName>
</protein>
<reference key="1">
    <citation type="journal article" date="2004" name="J. Mol. Evol.">
        <title>Comparative analysis of the complete plastid genome sequence of the red alga Gracilaria tenuistipitata var. liui provides insights into the evolution of rhodoplasts and their relationship to other plastids.</title>
        <authorList>
            <person name="Hagopian J.C."/>
            <person name="Reis M."/>
            <person name="Kitajima J.P."/>
            <person name="Bhattacharya D."/>
            <person name="de Oliveira M.C."/>
        </authorList>
    </citation>
    <scope>NUCLEOTIDE SEQUENCE [LARGE SCALE GENOMIC DNA]</scope>
</reference>
<name>PSBF_GRATL</name>
<feature type="chain" id="PRO_0000200394" description="Cytochrome b559 subunit beta">
    <location>
        <begin position="1"/>
        <end position="44"/>
    </location>
</feature>
<feature type="transmembrane region" description="Helical" evidence="1">
    <location>
        <begin position="19"/>
        <end position="35"/>
    </location>
</feature>
<feature type="binding site" description="axial binding residue" evidence="1">
    <location>
        <position position="23"/>
    </location>
    <ligand>
        <name>heme</name>
        <dbReference type="ChEBI" id="CHEBI:30413"/>
        <note>ligand shared with alpha subunit</note>
    </ligand>
    <ligandPart>
        <name>Fe</name>
        <dbReference type="ChEBI" id="CHEBI:18248"/>
    </ligandPart>
</feature>
<organism>
    <name type="scientific">Gracilaria tenuistipitata var. liui</name>
    <name type="common">Red alga</name>
    <dbReference type="NCBI Taxonomy" id="285951"/>
    <lineage>
        <taxon>Eukaryota</taxon>
        <taxon>Rhodophyta</taxon>
        <taxon>Florideophyceae</taxon>
        <taxon>Rhodymeniophycidae</taxon>
        <taxon>Gracilariales</taxon>
        <taxon>Gracilariaceae</taxon>
        <taxon>Gracilaria</taxon>
        <taxon>Gracilaria tenuistipitata</taxon>
    </lineage>
</organism>
<sequence length="44" mass="5043">MTRGNSNQPISYPIFTFRWLAIHGIAIPTVFFLGAITSMQFIQR</sequence>
<evidence type="ECO:0000255" key="1">
    <source>
        <dbReference type="HAMAP-Rule" id="MF_00643"/>
    </source>
</evidence>
<proteinExistence type="inferred from homology"/>